<accession>Q6JDT0</accession>
<accession>Q6JDT2</accession>
<organism>
    <name type="scientific">Microtus guentheri</name>
    <name type="common">Gunther's vole</name>
    <dbReference type="NCBI Taxonomy" id="269655"/>
    <lineage>
        <taxon>Eukaryota</taxon>
        <taxon>Metazoa</taxon>
        <taxon>Chordata</taxon>
        <taxon>Craniata</taxon>
        <taxon>Vertebrata</taxon>
        <taxon>Euteleostomi</taxon>
        <taxon>Mammalia</taxon>
        <taxon>Eutheria</taxon>
        <taxon>Euarchontoglires</taxon>
        <taxon>Glires</taxon>
        <taxon>Rodentia</taxon>
        <taxon>Myomorpha</taxon>
        <taxon>Muroidea</taxon>
        <taxon>Cricetidae</taxon>
        <taxon>Arvicolinae</taxon>
        <taxon>Microtus</taxon>
    </lineage>
</organism>
<dbReference type="EMBL" id="AY513804">
    <property type="protein sequence ID" value="AAS82796.1"/>
    <property type="molecule type" value="Genomic_DNA"/>
</dbReference>
<dbReference type="EMBL" id="AY513805">
    <property type="protein sequence ID" value="AAS82797.1"/>
    <property type="molecule type" value="Genomic_DNA"/>
</dbReference>
<dbReference type="EMBL" id="AY513806">
    <property type="protein sequence ID" value="AAS82798.1"/>
    <property type="molecule type" value="Genomic_DNA"/>
</dbReference>
<dbReference type="EMBL" id="AY513807">
    <property type="protein sequence ID" value="AAS82799.1"/>
    <property type="molecule type" value="Genomic_DNA"/>
</dbReference>
<dbReference type="SMR" id="Q6JDT0"/>
<dbReference type="GO" id="GO:0005743">
    <property type="term" value="C:mitochondrial inner membrane"/>
    <property type="evidence" value="ECO:0007669"/>
    <property type="project" value="UniProtKB-SubCell"/>
</dbReference>
<dbReference type="GO" id="GO:0045275">
    <property type="term" value="C:respiratory chain complex III"/>
    <property type="evidence" value="ECO:0007669"/>
    <property type="project" value="InterPro"/>
</dbReference>
<dbReference type="GO" id="GO:0046872">
    <property type="term" value="F:metal ion binding"/>
    <property type="evidence" value="ECO:0007669"/>
    <property type="project" value="UniProtKB-KW"/>
</dbReference>
<dbReference type="GO" id="GO:0008121">
    <property type="term" value="F:ubiquinol-cytochrome-c reductase activity"/>
    <property type="evidence" value="ECO:0007669"/>
    <property type="project" value="InterPro"/>
</dbReference>
<dbReference type="GO" id="GO:0006122">
    <property type="term" value="P:mitochondrial electron transport, ubiquinol to cytochrome c"/>
    <property type="evidence" value="ECO:0007669"/>
    <property type="project" value="TreeGrafter"/>
</dbReference>
<dbReference type="CDD" id="cd00290">
    <property type="entry name" value="cytochrome_b_C"/>
    <property type="match status" value="1"/>
</dbReference>
<dbReference type="CDD" id="cd00284">
    <property type="entry name" value="Cytochrome_b_N"/>
    <property type="match status" value="1"/>
</dbReference>
<dbReference type="FunFam" id="1.20.810.10:FF:000002">
    <property type="entry name" value="Cytochrome b"/>
    <property type="match status" value="1"/>
</dbReference>
<dbReference type="Gene3D" id="1.20.810.10">
    <property type="entry name" value="Cytochrome Bc1 Complex, Chain C"/>
    <property type="match status" value="1"/>
</dbReference>
<dbReference type="InterPro" id="IPR005798">
    <property type="entry name" value="Cyt_b/b6_C"/>
</dbReference>
<dbReference type="InterPro" id="IPR036150">
    <property type="entry name" value="Cyt_b/b6_C_sf"/>
</dbReference>
<dbReference type="InterPro" id="IPR005797">
    <property type="entry name" value="Cyt_b/b6_N"/>
</dbReference>
<dbReference type="InterPro" id="IPR027387">
    <property type="entry name" value="Cytb/b6-like_sf"/>
</dbReference>
<dbReference type="InterPro" id="IPR030689">
    <property type="entry name" value="Cytochrome_b"/>
</dbReference>
<dbReference type="InterPro" id="IPR048260">
    <property type="entry name" value="Cytochrome_b_C_euk/bac"/>
</dbReference>
<dbReference type="InterPro" id="IPR048259">
    <property type="entry name" value="Cytochrome_b_N_euk/bac"/>
</dbReference>
<dbReference type="InterPro" id="IPR016174">
    <property type="entry name" value="Di-haem_cyt_TM"/>
</dbReference>
<dbReference type="PANTHER" id="PTHR19271">
    <property type="entry name" value="CYTOCHROME B"/>
    <property type="match status" value="1"/>
</dbReference>
<dbReference type="PANTHER" id="PTHR19271:SF16">
    <property type="entry name" value="CYTOCHROME B"/>
    <property type="match status" value="1"/>
</dbReference>
<dbReference type="Pfam" id="PF00032">
    <property type="entry name" value="Cytochrom_B_C"/>
    <property type="match status" value="1"/>
</dbReference>
<dbReference type="Pfam" id="PF00033">
    <property type="entry name" value="Cytochrome_B"/>
    <property type="match status" value="1"/>
</dbReference>
<dbReference type="PIRSF" id="PIRSF038885">
    <property type="entry name" value="COB"/>
    <property type="match status" value="1"/>
</dbReference>
<dbReference type="SUPFAM" id="SSF81648">
    <property type="entry name" value="a domain/subunit of cytochrome bc1 complex (Ubiquinol-cytochrome c reductase)"/>
    <property type="match status" value="1"/>
</dbReference>
<dbReference type="SUPFAM" id="SSF81342">
    <property type="entry name" value="Transmembrane di-heme cytochromes"/>
    <property type="match status" value="1"/>
</dbReference>
<dbReference type="PROSITE" id="PS51003">
    <property type="entry name" value="CYTB_CTER"/>
    <property type="match status" value="1"/>
</dbReference>
<dbReference type="PROSITE" id="PS51002">
    <property type="entry name" value="CYTB_NTER"/>
    <property type="match status" value="1"/>
</dbReference>
<proteinExistence type="inferred from homology"/>
<sequence>MTIIRKKHPLIKIINHSFIDLPAPSNISSWWNFGSLLGLCLIIQILTGLFLAMHYTSDTATAFSSVTHICRDVNYGWLIRYMHANGASMFFICLFLHVGRGIYYGSYNMIETWNMGIVLLFAVMATAFMGYVLPWGQMSFWGATVITNLLSAIPYIGTTLVEWIWGGFSVDKATLTRFFAFHFILPFIITALVLVHLLFLHETGSNNPTGLNSDADKIPFHPYYTIKDFLGVLILLMAFMILTLFFPDILGDPDNYTPANPLNTPPHIKPEWYFLFAYAILRSIPNKLGGVLALILSIVILAFMPLLHTSKQRALTFRPITQTMYWILVADLLVLTWIGGQPVEYPFIIIGQTASIAYFAIIVILMPMAGMFENNIMDLD</sequence>
<protein>
    <recommendedName>
        <fullName>Cytochrome b</fullName>
    </recommendedName>
    <alternativeName>
        <fullName>Complex III subunit 3</fullName>
    </alternativeName>
    <alternativeName>
        <fullName>Complex III subunit III</fullName>
    </alternativeName>
    <alternativeName>
        <fullName>Cytochrome b-c1 complex subunit 3</fullName>
    </alternativeName>
    <alternativeName>
        <fullName>Ubiquinol-cytochrome-c reductase complex cytochrome b subunit</fullName>
    </alternativeName>
</protein>
<evidence type="ECO:0000250" key="1"/>
<evidence type="ECO:0000250" key="2">
    <source>
        <dbReference type="UniProtKB" id="P00157"/>
    </source>
</evidence>
<evidence type="ECO:0000255" key="3">
    <source>
        <dbReference type="PROSITE-ProRule" id="PRU00967"/>
    </source>
</evidence>
<evidence type="ECO:0000255" key="4">
    <source>
        <dbReference type="PROSITE-ProRule" id="PRU00968"/>
    </source>
</evidence>
<keyword id="KW-0249">Electron transport</keyword>
<keyword id="KW-0349">Heme</keyword>
<keyword id="KW-0408">Iron</keyword>
<keyword id="KW-0472">Membrane</keyword>
<keyword id="KW-0479">Metal-binding</keyword>
<keyword id="KW-0496">Mitochondrion</keyword>
<keyword id="KW-0999">Mitochondrion inner membrane</keyword>
<keyword id="KW-0679">Respiratory chain</keyword>
<keyword id="KW-0812">Transmembrane</keyword>
<keyword id="KW-1133">Transmembrane helix</keyword>
<keyword id="KW-0813">Transport</keyword>
<keyword id="KW-0830">Ubiquinone</keyword>
<gene>
    <name type="primary">MT-CYB</name>
    <name type="synonym">COB</name>
    <name type="synonym">CYTB</name>
    <name type="synonym">MTCYB</name>
</gene>
<geneLocation type="mitochondrion"/>
<comment type="function">
    <text evidence="2">Component of the ubiquinol-cytochrome c reductase complex (complex III or cytochrome b-c1 complex) that is part of the mitochondrial respiratory chain. The b-c1 complex mediates electron transfer from ubiquinol to cytochrome c. Contributes to the generation of a proton gradient across the mitochondrial membrane that is then used for ATP synthesis.</text>
</comment>
<comment type="cofactor">
    <cofactor evidence="2">
        <name>heme b</name>
        <dbReference type="ChEBI" id="CHEBI:60344"/>
    </cofactor>
    <text evidence="2">Binds 2 heme b groups non-covalently.</text>
</comment>
<comment type="subunit">
    <text evidence="2">The cytochrome bc1 complex contains 11 subunits: 3 respiratory subunits (MT-CYB, CYC1 and UQCRFS1), 2 core proteins (UQCRC1 and UQCRC2) and 6 low-molecular weight proteins (UQCRH/QCR6, UQCRB/QCR7, UQCRQ/QCR8, UQCR10/QCR9, UQCR11/QCR10 and a cleavage product of UQCRFS1). This cytochrome bc1 complex then forms a dimer.</text>
</comment>
<comment type="subcellular location">
    <subcellularLocation>
        <location evidence="2">Mitochondrion inner membrane</location>
        <topology evidence="2">Multi-pass membrane protein</topology>
    </subcellularLocation>
</comment>
<comment type="miscellaneous">
    <text evidence="1">Heme 1 (or BL or b562) is low-potential and absorbs at about 562 nm, and heme 2 (or BH or b566) is high-potential and absorbs at about 566 nm.</text>
</comment>
<comment type="similarity">
    <text evidence="3 4">Belongs to the cytochrome b family.</text>
</comment>
<comment type="caution">
    <text evidence="2">The full-length protein contains only eight transmembrane helices, not nine as predicted by bioinformatics tools.</text>
</comment>
<name>CYB_MICGN</name>
<feature type="chain" id="PRO_0000255081" description="Cytochrome b">
    <location>
        <begin position="1"/>
        <end position="380"/>
    </location>
</feature>
<feature type="transmembrane region" description="Helical" evidence="2">
    <location>
        <begin position="33"/>
        <end position="53"/>
    </location>
</feature>
<feature type="transmembrane region" description="Helical" evidence="2">
    <location>
        <begin position="77"/>
        <end position="98"/>
    </location>
</feature>
<feature type="transmembrane region" description="Helical" evidence="2">
    <location>
        <begin position="113"/>
        <end position="133"/>
    </location>
</feature>
<feature type="transmembrane region" description="Helical" evidence="2">
    <location>
        <begin position="178"/>
        <end position="198"/>
    </location>
</feature>
<feature type="transmembrane region" description="Helical" evidence="2">
    <location>
        <begin position="226"/>
        <end position="246"/>
    </location>
</feature>
<feature type="transmembrane region" description="Helical" evidence="2">
    <location>
        <begin position="288"/>
        <end position="308"/>
    </location>
</feature>
<feature type="transmembrane region" description="Helical" evidence="2">
    <location>
        <begin position="320"/>
        <end position="340"/>
    </location>
</feature>
<feature type="transmembrane region" description="Helical" evidence="2">
    <location>
        <begin position="347"/>
        <end position="367"/>
    </location>
</feature>
<feature type="binding site" description="axial binding residue" evidence="2">
    <location>
        <position position="83"/>
    </location>
    <ligand>
        <name>heme b</name>
        <dbReference type="ChEBI" id="CHEBI:60344"/>
        <label>b562</label>
    </ligand>
    <ligandPart>
        <name>Fe</name>
        <dbReference type="ChEBI" id="CHEBI:18248"/>
    </ligandPart>
</feature>
<feature type="binding site" description="axial binding residue" evidence="2">
    <location>
        <position position="97"/>
    </location>
    <ligand>
        <name>heme b</name>
        <dbReference type="ChEBI" id="CHEBI:60344"/>
        <label>b566</label>
    </ligand>
    <ligandPart>
        <name>Fe</name>
        <dbReference type="ChEBI" id="CHEBI:18248"/>
    </ligandPart>
</feature>
<feature type="binding site" description="axial binding residue" evidence="2">
    <location>
        <position position="182"/>
    </location>
    <ligand>
        <name>heme b</name>
        <dbReference type="ChEBI" id="CHEBI:60344"/>
        <label>b562</label>
    </ligand>
    <ligandPart>
        <name>Fe</name>
        <dbReference type="ChEBI" id="CHEBI:18248"/>
    </ligandPart>
</feature>
<feature type="binding site" description="axial binding residue" evidence="2">
    <location>
        <position position="196"/>
    </location>
    <ligand>
        <name>heme b</name>
        <dbReference type="ChEBI" id="CHEBI:60344"/>
        <label>b566</label>
    </ligand>
    <ligandPart>
        <name>Fe</name>
        <dbReference type="ChEBI" id="CHEBI:18248"/>
    </ligandPart>
</feature>
<feature type="binding site" evidence="2">
    <location>
        <position position="201"/>
    </location>
    <ligand>
        <name>a ubiquinone</name>
        <dbReference type="ChEBI" id="CHEBI:16389"/>
    </ligand>
</feature>
<feature type="sequence variant" description="In strain: Isolate 1.">
    <original>V</original>
    <variation>I</variation>
    <location>
        <position position="118"/>
    </location>
</feature>
<feature type="sequence variant" description="In strain: Isolate 1.">
    <original>A</original>
    <variation>V</variation>
    <location>
        <position position="238"/>
    </location>
</feature>
<reference key="1">
    <citation type="journal article" date="2004" name="Mol. Phylogenet. Evol.">
        <title>Molecular phylogeny of the speciose vole genus Microtus (Arvicolinae, Rodentia) inferred from mitochondrial DNA sequences.</title>
        <authorList>
            <person name="Jaarola M."/>
            <person name="Martinkova N."/>
            <person name="Gunduz I."/>
            <person name="Brunhoff C."/>
            <person name="Zima J."/>
            <person name="Nadachowski A."/>
            <person name="Amori G."/>
            <person name="Bulatova N.S."/>
            <person name="Chondropoulos B."/>
            <person name="Fraguedakis-Tsolis S."/>
            <person name="Gonzalez-Esteban J."/>
            <person name="Lopez-Fuster M.J."/>
            <person name="Kandaurov A.S."/>
            <person name="Kefelioglu H."/>
            <person name="Mathias M.L."/>
            <person name="Villate I."/>
            <person name="Searle J.B."/>
        </authorList>
    </citation>
    <scope>NUCLEOTIDE SEQUENCE [GENOMIC DNA]</scope>
    <source>
        <strain>Isolate 1</strain>
        <strain>Isolate 2</strain>
        <strain>Isolate 3</strain>
        <strain>Isolate 4</strain>
    </source>
</reference>